<organism>
    <name type="scientific">Porcine reproductive and respiratory syndrome virus (isolate Pig/United States/SD 01-08/2001)</name>
    <name type="common">PRRSV</name>
    <dbReference type="NCBI Taxonomy" id="857306"/>
    <lineage>
        <taxon>Viruses</taxon>
        <taxon>Riboviria</taxon>
        <taxon>Orthornavirae</taxon>
        <taxon>Pisuviricota</taxon>
        <taxon>Pisoniviricetes</taxon>
        <taxon>Nidovirales</taxon>
        <taxon>Arnidovirineae</taxon>
        <taxon>Arteriviridae</taxon>
        <taxon>Variarterivirinae</taxon>
        <taxon>Betaarterivirus</taxon>
        <taxon>Ampobartevirus</taxon>
        <taxon>Betaarterivirus americense</taxon>
    </lineage>
</organism>
<organismHost>
    <name type="scientific">Sus scrofa</name>
    <name type="common">Pig</name>
    <dbReference type="NCBI Taxonomy" id="9823"/>
</organismHost>
<evidence type="ECO:0000250" key="1"/>
<evidence type="ECO:0000255" key="2"/>
<evidence type="ECO:0000255" key="3">
    <source>
        <dbReference type="PROSITE-ProRule" id="PRU00871"/>
    </source>
</evidence>
<evidence type="ECO:0000255" key="4">
    <source>
        <dbReference type="PROSITE-ProRule" id="PRU00872"/>
    </source>
</evidence>
<evidence type="ECO:0000255" key="5">
    <source>
        <dbReference type="PROSITE-ProRule" id="PRU00873"/>
    </source>
</evidence>
<evidence type="ECO:0000256" key="6">
    <source>
        <dbReference type="SAM" id="MobiDB-lite"/>
    </source>
</evidence>
<evidence type="ECO:0000269" key="7">
    <source>
    </source>
</evidence>
<evidence type="ECO:0000269" key="8">
    <source>
    </source>
</evidence>
<evidence type="ECO:0000305" key="9"/>
<evidence type="ECO:0007829" key="10">
    <source>
        <dbReference type="PDB" id="8EHN"/>
    </source>
</evidence>
<keyword id="KW-0002">3D-structure</keyword>
<keyword id="KW-0067">ATP-binding</keyword>
<keyword id="KW-0347">Helicase</keyword>
<keyword id="KW-1035">Host cytoplasm</keyword>
<keyword id="KW-1038">Host endoplasmic reticulum</keyword>
<keyword id="KW-1043">Host membrane</keyword>
<keyword id="KW-1048">Host nucleus</keyword>
<keyword id="KW-0945">Host-virus interaction</keyword>
<keyword id="KW-0378">Hydrolase</keyword>
<keyword id="KW-0472">Membrane</keyword>
<keyword id="KW-0479">Metal-binding</keyword>
<keyword id="KW-0547">Nucleotide-binding</keyword>
<keyword id="KW-0645">Protease</keyword>
<keyword id="KW-0688">Ribosomal frameshifting</keyword>
<keyword id="KW-0788">Thiol protease</keyword>
<keyword id="KW-0812">Transmembrane</keyword>
<keyword id="KW-1133">Transmembrane helix</keyword>
<keyword id="KW-0862">Zinc</keyword>
<keyword id="KW-0863">Zinc-finger</keyword>
<accession>P0DJY0</accession>
<dbReference type="EC" id="3.4.22.-"/>
<dbReference type="EMBL" id="AY375474">
    <property type="status" value="NOT_ANNOTATED_CDS"/>
    <property type="molecule type" value="Genomic_RNA"/>
</dbReference>
<dbReference type="EMBL" id="DQ489311">
    <property type="status" value="NOT_ANNOTATED_CDS"/>
    <property type="molecule type" value="Genomic_RNA"/>
</dbReference>
<dbReference type="PDB" id="8EHN">
    <property type="method" value="X-ray"/>
    <property type="resolution" value="2.30 A"/>
    <property type="chains" value="A/B=385-578"/>
</dbReference>
<dbReference type="PDBsum" id="8EHN"/>
<dbReference type="SMR" id="P0DJY0"/>
<dbReference type="Proteomes" id="UP000000937">
    <property type="component" value="Genome"/>
</dbReference>
<dbReference type="GO" id="GO:0044167">
    <property type="term" value="C:host cell endoplasmic reticulum membrane"/>
    <property type="evidence" value="ECO:0007669"/>
    <property type="project" value="UniProtKB-SubCell"/>
</dbReference>
<dbReference type="GO" id="GO:0042025">
    <property type="term" value="C:host cell nucleus"/>
    <property type="evidence" value="ECO:0007669"/>
    <property type="project" value="UniProtKB-SubCell"/>
</dbReference>
<dbReference type="GO" id="GO:0016020">
    <property type="term" value="C:membrane"/>
    <property type="evidence" value="ECO:0007669"/>
    <property type="project" value="UniProtKB-SubCell"/>
</dbReference>
<dbReference type="GO" id="GO:0005524">
    <property type="term" value="F:ATP binding"/>
    <property type="evidence" value="ECO:0007669"/>
    <property type="project" value="UniProtKB-KW"/>
</dbReference>
<dbReference type="GO" id="GO:0004197">
    <property type="term" value="F:cysteine-type endopeptidase activity"/>
    <property type="evidence" value="ECO:0007669"/>
    <property type="project" value="InterPro"/>
</dbReference>
<dbReference type="GO" id="GO:0004386">
    <property type="term" value="F:helicase activity"/>
    <property type="evidence" value="ECO:0007669"/>
    <property type="project" value="UniProtKB-KW"/>
</dbReference>
<dbReference type="GO" id="GO:0008270">
    <property type="term" value="F:zinc ion binding"/>
    <property type="evidence" value="ECO:0007669"/>
    <property type="project" value="UniProtKB-KW"/>
</dbReference>
<dbReference type="GO" id="GO:0006508">
    <property type="term" value="P:proteolysis"/>
    <property type="evidence" value="ECO:0007669"/>
    <property type="project" value="UniProtKB-KW"/>
</dbReference>
<dbReference type="GO" id="GO:0019082">
    <property type="term" value="P:viral protein processing"/>
    <property type="evidence" value="ECO:0007669"/>
    <property type="project" value="InterPro"/>
</dbReference>
<dbReference type="GO" id="GO:0075523">
    <property type="term" value="P:viral translational frameshifting"/>
    <property type="evidence" value="ECO:0007669"/>
    <property type="project" value="UniProtKB-KW"/>
</dbReference>
<dbReference type="FunFam" id="3.90.70.160:FF:000001">
    <property type="entry name" value="ORF1a polyprotein"/>
    <property type="match status" value="1"/>
</dbReference>
<dbReference type="FunFam" id="3.90.70.60:FF:000001">
    <property type="entry name" value="Polyprotein 1a"/>
    <property type="match status" value="1"/>
</dbReference>
<dbReference type="FunFam" id="2.30.31.30:FF:000001">
    <property type="entry name" value="Replicase polyprotein 1ab"/>
    <property type="match status" value="1"/>
</dbReference>
<dbReference type="Gene3D" id="3.90.70.160">
    <property type="match status" value="1"/>
</dbReference>
<dbReference type="Gene3D" id="4.10.80.390">
    <property type="match status" value="1"/>
</dbReference>
<dbReference type="Gene3D" id="2.30.31.30">
    <property type="entry name" value="Arterivirus nps1beta, nuclease domain"/>
    <property type="match status" value="1"/>
</dbReference>
<dbReference type="Gene3D" id="3.90.70.70">
    <property type="entry name" value="Arterivirus papain-like cysteine protease beta domain"/>
    <property type="match status" value="1"/>
</dbReference>
<dbReference type="Gene3D" id="3.90.70.60">
    <property type="entry name" value="Porcine arterivirus-type cysteine proteinase alpha domain"/>
    <property type="match status" value="1"/>
</dbReference>
<dbReference type="InterPro" id="IPR008743">
    <property type="entry name" value="Arterivirus_Nsp2_C33"/>
</dbReference>
<dbReference type="InterPro" id="IPR008741">
    <property type="entry name" value="AV_PCPalpha"/>
</dbReference>
<dbReference type="InterPro" id="IPR038155">
    <property type="entry name" value="AV_PCPalpha_sf"/>
</dbReference>
<dbReference type="InterPro" id="IPR025773">
    <property type="entry name" value="AV_PCPbeta"/>
</dbReference>
<dbReference type="InterPro" id="IPR038154">
    <property type="entry name" value="AV_PCPbeta_sf"/>
</dbReference>
<dbReference type="InterPro" id="IPR054104">
    <property type="entry name" value="Nsp1alpha_Znf"/>
</dbReference>
<dbReference type="InterPro" id="IPR032855">
    <property type="entry name" value="NSP2-B_epitope"/>
</dbReference>
<dbReference type="InterPro" id="IPR032841">
    <property type="entry name" value="NSP2_assoc"/>
</dbReference>
<dbReference type="Pfam" id="PF14757">
    <property type="entry name" value="NSP2-B_epitope"/>
    <property type="match status" value="1"/>
</dbReference>
<dbReference type="Pfam" id="PF14758">
    <property type="entry name" value="NSP2_assoc"/>
    <property type="match status" value="1"/>
</dbReference>
<dbReference type="Pfam" id="PF05410">
    <property type="entry name" value="Peptidase_C31"/>
    <property type="match status" value="1"/>
</dbReference>
<dbReference type="Pfam" id="PF05411">
    <property type="entry name" value="Peptidase_C32"/>
    <property type="match status" value="1"/>
</dbReference>
<dbReference type="Pfam" id="PF05412">
    <property type="entry name" value="Peptidase_C33"/>
    <property type="match status" value="1"/>
</dbReference>
<dbReference type="Pfam" id="PF21905">
    <property type="entry name" value="Zf-Nsp1alpha"/>
    <property type="match status" value="1"/>
</dbReference>
<dbReference type="PROSITE" id="PS51538">
    <property type="entry name" value="AV_CP"/>
    <property type="match status" value="1"/>
</dbReference>
<dbReference type="PROSITE" id="PS51539">
    <property type="entry name" value="AV_PCP_ALPHA"/>
    <property type="match status" value="1"/>
</dbReference>
<dbReference type="PROSITE" id="PS51540">
    <property type="entry name" value="AV_PCP_BETA"/>
    <property type="match status" value="1"/>
</dbReference>
<protein>
    <recommendedName>
        <fullName>Truncated polyprotein 1aTF</fullName>
    </recommendedName>
    <component>
        <recommendedName>
            <fullName>Nsp1</fullName>
            <ecNumber>3.4.22.-</ecNumber>
        </recommendedName>
    </component>
    <component>
        <recommendedName>
            <fullName>Nsp1-alpha papain-like cysteine proteinase</fullName>
            <ecNumber>3.4.22.-</ecNumber>
        </recommendedName>
        <alternativeName>
            <fullName>PCP1-alpha</fullName>
        </alternativeName>
    </component>
    <component>
        <recommendedName>
            <fullName>Nsp1-beta papain-like cysteine proteinase</fullName>
            <ecNumber>3.4.22.-</ecNumber>
        </recommendedName>
        <alternativeName>
            <fullName>PCP1-beta</fullName>
        </alternativeName>
    </component>
    <component>
        <recommendedName>
            <fullName>Nsp2TF</fullName>
        </recommendedName>
    </component>
</protein>
<sequence>MSGTFSRCMCTPAARVFWNAGQVFCTRCLSARPLLSPELQDTDLGVVGLFYKPKDKIHWKVPIGIPQVECTPSGCCWLSAVFPLARMTSGNHNFLQRLVKVADVLYRDGCLAPRHLRELQVYERGCSWYPITGPVPGMGLFANSMHVSDQPFPGATHVLTNSPLPQRACRQPFCPFEEAHSDVYRWKKFVIFTDSSPNGRFRMMWTPESDDSAALEVLPPELERQVEILTRSFPAHHPINLADWELTESPENGFSFGTSHSCGHIVQNPNVFDGKCWLTCFLGQSAEVCYHEEHLANALGYQTKWGVHGKYLQRRLQVRGMRAVVDPDGPIHVEALSCSQSWVRHLTLNNDVTPGFVRLTSIRIVSNTEPTAFRIFRFGAHKWYGAAGKRARAKRATKSGKDSALAPKIAPPVPTCGITTYSPPTDGSCGWHVLAAIVNRMINGDFTSPLPQYNRPEDDWASDYDLAQAIQCLQLPATVVRNRACPNAKYLIKLNGVHWEVEVRSGMAPRSLSRECVVGVCSEGCVAPPYPADGLPKRALEALASAYRLPSDCVSSGIADFLADPPPQEFWTLDKMLTSPSPERSGFSSLYKLLLEVVPQKCGATEGAFVYAVERMLKDCPSPEQAMALLAKIKVPSSKAPSVSLDECFPAGVPADFEPAFQERPRSPGAAVALCSPDAKGFEGTASEEAQESGHKAVHAVPLAEGPNNEQVQVVAGEQLELGGCGLAIGSAQSSSDSKRENMHNSREDEPLDLSHPAPAATTTLVGEQTPDNPGSDASALPIAVRGFVPTGPILRHVEHCGTESGDSSSPLDLSFAQTLDQPLDLSLAAWPVKATASDPGWVRGRCEPVFLKPRKAFSDGDSALQFGELSESSSVIEFDQTKDTLVADAPVDLTTSNEALSAVDPSEFVELRRPRHSAQALIDRGGPLADVHAKIKNRVYEQCLQACEPGSRATPATREWLDKMWDRVDMKTWRCTSQFQAGRILASLKFLPDMIQDTPPPVPRKNRASDNAGLKQLVARWDKKLSVTPPPKSAGLVLDQTVPPPTDIQQEDATPSDGLSHASDFSSRVSTSWSWKGLMLSGTRLAGSAGQRLMTWVFLKFTPISQLLYSHFSRRGALWLQAIGCLQVLFYLLSCSVVLTQYSDAFPYWVSFLVLCGVFVWVFLVLGWLLLYFYSRLHPTQSVLLVTTIRRNVMLSFWLLSSANFGNLCAALWLAPQVSYVSSLASYSVGHVISGMLSYVYACLQIWPFLLFMWCPKGVVTSVGESV</sequence>
<proteinExistence type="evidence at protein level"/>
<reference key="1">
    <citation type="journal article" date="2004" name="Virus Res.">
        <title>Heterogeneity in Nsp2 of European-like porcine reproductive and respiratory syndrome viruses isolated in the United States.</title>
        <authorList>
            <person name="Fang Y."/>
            <person name="Kim D.Y."/>
            <person name="Ropp S."/>
            <person name="Steen P."/>
            <person name="Christopher-Hennings J."/>
            <person name="Nelson E.A."/>
            <person name="Rowland R.R."/>
        </authorList>
    </citation>
    <scope>NUCLEOTIDE SEQUENCE [GENOMIC RNA]</scope>
</reference>
<reference key="2">
    <citation type="journal article" date="2006" name="J. Virol.">
        <title>A full-length cDNA infectious clone of North American type 1 porcine reproductive and respiratory syndrome virus: expression of green fluorescent protein in the Nsp2 region.</title>
        <authorList>
            <person name="Fang Y."/>
            <person name="Rowland R.R."/>
            <person name="Roof M."/>
            <person name="Lunney J.K."/>
            <person name="Christopher-Hennings J."/>
            <person name="Nelson E.A."/>
        </authorList>
    </citation>
    <scope>NUCLEOTIDE SEQUENCE [GENOMIC RNA]</scope>
    <source>
        <strain>Infectious clone SD 01-08</strain>
    </source>
</reference>
<reference key="3">
    <citation type="journal article" date="2012" name="Proc. Natl. Acad. Sci. U.S.A.">
        <title>Efficient -2 frameshifting by mammalian ribosomes to synthesize an additional arterivirus protein.</title>
        <authorList>
            <person name="Fang Y."/>
            <person name="Treffers E.E."/>
            <person name="Li Y."/>
            <person name="Tas A."/>
            <person name="Sun Z."/>
            <person name="van der Meer Y."/>
            <person name="de Ru A.H."/>
            <person name="van Veelen P.A."/>
            <person name="Atkins J.F."/>
            <person name="Snijder E.J."/>
            <person name="Firth A.E."/>
        </authorList>
    </citation>
    <scope>IDENTIFICATION</scope>
    <scope>RIBOSOMAL FRAMESHIFTING</scope>
    <scope>DISRUPTION PHENOTYPE</scope>
</reference>
<reference key="4">
    <citation type="journal article" date="2014" name="Proc. Natl. Acad. Sci. U.S.A.">
        <title>Transactivation of programmed ribosomal frameshifting by a viral protein.</title>
        <authorList>
            <person name="Li Y."/>
            <person name="Treffers E.E."/>
            <person name="Napthine S."/>
            <person name="Tas A."/>
            <person name="Zhu L."/>
            <person name="Sun Z."/>
            <person name="Bell S."/>
            <person name="Mark B.L."/>
            <person name="van Veelen P.A."/>
            <person name="van Hemert M.J."/>
            <person name="Firth A.E."/>
            <person name="Brierley I."/>
            <person name="Snijder E.J."/>
            <person name="Fang Y."/>
        </authorList>
    </citation>
    <scope>FUNCTION (NSP1-BETA)</scope>
    <source>
        <strain>SD95-21</strain>
    </source>
</reference>
<feature type="chain" id="PRO_0000423161" description="Truncated polyprotein 1aTF" evidence="2">
    <location>
        <begin position="1"/>
        <end position="1268"/>
    </location>
</feature>
<feature type="chain" id="PRO_0000423162" description="Nsp1" evidence="1">
    <location>
        <begin position="1"/>
        <end position="384"/>
    </location>
</feature>
<feature type="chain" id="PRO_0000423163" description="Nsp1-alpha papain-like cysteine proteinase" evidence="2">
    <location>
        <begin position="1"/>
        <end position="180"/>
    </location>
</feature>
<feature type="chain" id="PRO_0000423164" description="Nsp1-beta papain-like cysteine proteinase" evidence="2">
    <location>
        <begin position="181"/>
        <end position="385"/>
    </location>
</feature>
<feature type="chain" id="PRO_0000423165" description="Nsp2TF" evidence="1">
    <location>
        <begin position="386"/>
        <end position="1268"/>
    </location>
</feature>
<feature type="transmembrane region" description="Helical" evidence="2">
    <location>
        <begin position="1119"/>
        <end position="1139"/>
    </location>
</feature>
<feature type="transmembrane region" description="Helical" evidence="2">
    <location>
        <begin position="1153"/>
        <end position="1173"/>
    </location>
</feature>
<feature type="transmembrane region" description="Helical" evidence="2">
    <location>
        <begin position="1194"/>
        <end position="1214"/>
    </location>
</feature>
<feature type="transmembrane region" description="Helical" evidence="2">
    <location>
        <begin position="1233"/>
        <end position="1253"/>
    </location>
</feature>
<feature type="domain" description="Peptidase C31" evidence="4">
    <location>
        <begin position="69"/>
        <end position="180"/>
    </location>
</feature>
<feature type="domain" description="Peptidase C32" evidence="5">
    <location>
        <begin position="269"/>
        <end position="385"/>
    </location>
</feature>
<feature type="domain" description="Peptidase C33" evidence="3">
    <location>
        <begin position="420"/>
        <end position="527"/>
    </location>
</feature>
<feature type="zinc finger region" description="C4-type; atypical">
    <location>
        <begin position="8"/>
        <end position="28"/>
    </location>
</feature>
<feature type="region of interest" description="PCP1-alpha" evidence="1">
    <location>
        <begin position="69"/>
        <end position="182"/>
    </location>
</feature>
<feature type="region of interest" description="PCP1-beta" evidence="1">
    <location>
        <begin position="269"/>
        <end position="384"/>
    </location>
</feature>
<feature type="region of interest" description="Disordered" evidence="6">
    <location>
        <begin position="728"/>
        <end position="758"/>
    </location>
</feature>
<feature type="region of interest" description="Disordered" evidence="6">
    <location>
        <begin position="1027"/>
        <end position="1064"/>
    </location>
</feature>
<feature type="compositionally biased region" description="Basic and acidic residues" evidence="6">
    <location>
        <begin position="737"/>
        <end position="749"/>
    </location>
</feature>
<feature type="active site" description="For Nsp1-alpha papain-like cysteine proteinase activity" evidence="4">
    <location>
        <position position="76"/>
    </location>
</feature>
<feature type="active site" description="For Nsp1-alpha papain-like cysteine proteinase activity" evidence="4">
    <location>
        <position position="146"/>
    </location>
</feature>
<feature type="active site" description="For Nsp1-beta papain-like cysteine proteinase activity" evidence="5">
    <location>
        <position position="276"/>
    </location>
</feature>
<feature type="active site" description="For Nsp1-beta papain-like cysteine proteinase activity" evidence="5">
    <location>
        <position position="345"/>
    </location>
</feature>
<feature type="active site" description="For Nsp2 cysteine proteinase activity" evidence="3">
    <location>
        <position position="429"/>
    </location>
</feature>
<feature type="active site" description="For Nsp2 cysteine proteinase activity" evidence="3">
    <location>
        <position position="498"/>
    </location>
</feature>
<feature type="site" description="Cleavage; by autolysis" evidence="2">
    <location>
        <begin position="180"/>
        <end position="181"/>
    </location>
</feature>
<feature type="site" description="Cleavage; by autolysis" evidence="1">
    <location>
        <begin position="385"/>
        <end position="386"/>
    </location>
</feature>
<feature type="strand" evidence="10">
    <location>
        <begin position="418"/>
        <end position="422"/>
    </location>
</feature>
<feature type="strand" evidence="10">
    <location>
        <begin position="425"/>
        <end position="427"/>
    </location>
</feature>
<feature type="helix" evidence="10">
    <location>
        <begin position="429"/>
        <end position="443"/>
    </location>
</feature>
<feature type="helix" evidence="10">
    <location>
        <begin position="457"/>
        <end position="459"/>
    </location>
</feature>
<feature type="helix" evidence="10">
    <location>
        <begin position="463"/>
        <end position="473"/>
    </location>
</feature>
<feature type="strand" evidence="10">
    <location>
        <begin position="476"/>
        <end position="479"/>
    </location>
</feature>
<feature type="strand" evidence="10">
    <location>
        <begin position="481"/>
        <end position="483"/>
    </location>
</feature>
<feature type="strand" evidence="10">
    <location>
        <begin position="489"/>
        <end position="495"/>
    </location>
</feature>
<feature type="strand" evidence="10">
    <location>
        <begin position="498"/>
        <end position="507"/>
    </location>
</feature>
<feature type="helix" evidence="10">
    <location>
        <begin position="514"/>
        <end position="518"/>
    </location>
</feature>
<feature type="helix" evidence="10">
    <location>
        <begin position="539"/>
        <end position="546"/>
    </location>
</feature>
<feature type="helix" evidence="10">
    <location>
        <begin position="551"/>
        <end position="553"/>
    </location>
</feature>
<feature type="helix" evidence="10">
    <location>
        <begin position="554"/>
        <end position="563"/>
    </location>
</feature>
<name>1ATF_PRRSS</name>
<comment type="function">
    <molecule>Nsp1</molecule>
    <text evidence="1">Is essential for viral subgenomic mRNA synthesis.</text>
</comment>
<comment type="function">
    <molecule>Nsp1-alpha papain-like cysteine proteinase</molecule>
    <text evidence="1">Inhibits IFN-beta production. Counteracts the action of NF-kappaB by decreasing the phosphorylation of IkappaB-alpha, such that the degradation of IkappaB-alpha is suppressed. This leads to the blockage of NF-kappaB nuclear translocation and thus interference of NF-kappaB activation. Also seems to inhibit IRF3-dependent pathways (By similarity).</text>
</comment>
<comment type="function">
    <text evidence="8">Nsp1-beta transactivates the programmed ribosomal frameshifting event leading to the expression of the 1aTF polyprotein.</text>
</comment>
<comment type="subcellular location">
    <molecule>Nsp1</molecule>
    <subcellularLocation>
        <location evidence="1">Host nucleus</location>
    </subcellularLocation>
    <subcellularLocation>
        <location evidence="1">Host cytoplasm</location>
    </subcellularLocation>
</comment>
<comment type="subcellular location">
    <molecule>Nsp1-alpha papain-like cysteine proteinase</molecule>
    <subcellularLocation>
        <location evidence="1">Host nucleus</location>
    </subcellularLocation>
    <subcellularLocation>
        <location evidence="1">Host cytoplasm</location>
    </subcellularLocation>
</comment>
<comment type="subcellular location">
    <molecule>Nsp1-beta papain-like cysteine proteinase</molecule>
    <subcellularLocation>
        <location evidence="1">Host cytoplasm</location>
    </subcellularLocation>
</comment>
<comment type="subcellular location">
    <molecule>Nsp2TF</molecule>
    <subcellularLocation>
        <location evidence="9">Host endoplasmic reticulum membrane</location>
        <topology evidence="9">Multi-pass membrane protein</topology>
    </subcellularLocation>
</comment>
<comment type="subcellular location">
    <subcellularLocation>
        <location evidence="9">Membrane</location>
        <topology evidence="9">Multi-pass membrane protein</topology>
    </subcellularLocation>
</comment>
<comment type="alternative products">
    <event type="ribosomal frameshifting"/>
    <isoform>
        <id>P0DJY0-1</id>
        <name>Truncated polyprotein 1aTF</name>
        <sequence type="displayed"/>
    </isoform>
    <isoform>
        <id>A0MD28-1</id>
        <name>Replicase polyprotein 1ab</name>
        <name>pp1ab</name>
        <sequence type="external"/>
    </isoform>
    <isoform>
        <id>A0MD28-2</id>
        <name>Replicase polyprotein 1a</name>
        <name>pp1a</name>
        <name>ORF1a polyprotein</name>
        <sequence type="external"/>
    </isoform>
</comment>
<comment type="disruption phenotype">
    <text evidence="7">Knockout mutants display reduced infectivity.</text>
</comment>
<comment type="miscellaneous">
    <molecule>Isoform Truncated polyprotein 1aTF</molecule>
    <text>Produced by -2 ribosomal frameshifting in the nsp2 gene.</text>
</comment>